<dbReference type="EMBL" id="CP000084">
    <property type="protein sequence ID" value="AAZ21050.1"/>
    <property type="molecule type" value="Genomic_DNA"/>
</dbReference>
<dbReference type="RefSeq" id="WP_006997681.1">
    <property type="nucleotide sequence ID" value="NC_007205.1"/>
</dbReference>
<dbReference type="SMR" id="Q4FP39"/>
<dbReference type="STRING" id="335992.SAR11_0229"/>
<dbReference type="GeneID" id="66294726"/>
<dbReference type="KEGG" id="pub:SAR11_0229"/>
<dbReference type="eggNOG" id="COG0355">
    <property type="taxonomic scope" value="Bacteria"/>
</dbReference>
<dbReference type="HOGENOM" id="CLU_084338_2_1_5"/>
<dbReference type="OrthoDB" id="9799969at2"/>
<dbReference type="Proteomes" id="UP000002528">
    <property type="component" value="Chromosome"/>
</dbReference>
<dbReference type="GO" id="GO:0005886">
    <property type="term" value="C:plasma membrane"/>
    <property type="evidence" value="ECO:0007669"/>
    <property type="project" value="UniProtKB-SubCell"/>
</dbReference>
<dbReference type="GO" id="GO:0045259">
    <property type="term" value="C:proton-transporting ATP synthase complex"/>
    <property type="evidence" value="ECO:0007669"/>
    <property type="project" value="UniProtKB-KW"/>
</dbReference>
<dbReference type="GO" id="GO:0005524">
    <property type="term" value="F:ATP binding"/>
    <property type="evidence" value="ECO:0007669"/>
    <property type="project" value="UniProtKB-UniRule"/>
</dbReference>
<dbReference type="GO" id="GO:0046933">
    <property type="term" value="F:proton-transporting ATP synthase activity, rotational mechanism"/>
    <property type="evidence" value="ECO:0007669"/>
    <property type="project" value="UniProtKB-UniRule"/>
</dbReference>
<dbReference type="CDD" id="cd12152">
    <property type="entry name" value="F1-ATPase_delta"/>
    <property type="match status" value="1"/>
</dbReference>
<dbReference type="Gene3D" id="2.60.15.10">
    <property type="entry name" value="F0F1 ATP synthase delta/epsilon subunit, N-terminal"/>
    <property type="match status" value="1"/>
</dbReference>
<dbReference type="HAMAP" id="MF_00530">
    <property type="entry name" value="ATP_synth_epsil_bac"/>
    <property type="match status" value="1"/>
</dbReference>
<dbReference type="InterPro" id="IPR001469">
    <property type="entry name" value="ATP_synth_F1_dsu/esu"/>
</dbReference>
<dbReference type="InterPro" id="IPR020546">
    <property type="entry name" value="ATP_synth_F1_dsu/esu_N"/>
</dbReference>
<dbReference type="InterPro" id="IPR036771">
    <property type="entry name" value="ATPsynth_dsu/esu_N"/>
</dbReference>
<dbReference type="NCBIfam" id="TIGR01216">
    <property type="entry name" value="ATP_synt_epsi"/>
    <property type="match status" value="1"/>
</dbReference>
<dbReference type="PANTHER" id="PTHR13822">
    <property type="entry name" value="ATP SYNTHASE DELTA/EPSILON CHAIN"/>
    <property type="match status" value="1"/>
</dbReference>
<dbReference type="PANTHER" id="PTHR13822:SF10">
    <property type="entry name" value="ATP SYNTHASE EPSILON CHAIN, CHLOROPLASTIC"/>
    <property type="match status" value="1"/>
</dbReference>
<dbReference type="Pfam" id="PF02823">
    <property type="entry name" value="ATP-synt_DE_N"/>
    <property type="match status" value="1"/>
</dbReference>
<dbReference type="SUPFAM" id="SSF51344">
    <property type="entry name" value="Epsilon subunit of F1F0-ATP synthase N-terminal domain"/>
    <property type="match status" value="1"/>
</dbReference>
<comment type="function">
    <text evidence="1">Produces ATP from ADP in the presence of a proton gradient across the membrane.</text>
</comment>
<comment type="subunit">
    <text>F-type ATPases have 2 components, CF(1) - the catalytic core - and CF(0) - the membrane proton channel. CF(1) has five subunits: alpha(3), beta(3), gamma(1), delta(1), epsilon(1). CF(0) has three main subunits: a, b and c.</text>
</comment>
<comment type="subcellular location">
    <subcellularLocation>
        <location evidence="1">Cell inner membrane</location>
        <topology evidence="1">Peripheral membrane protein</topology>
    </subcellularLocation>
</comment>
<comment type="similarity">
    <text evidence="1">Belongs to the ATPase epsilon chain family.</text>
</comment>
<evidence type="ECO:0000255" key="1">
    <source>
        <dbReference type="HAMAP-Rule" id="MF_00530"/>
    </source>
</evidence>
<keyword id="KW-0066">ATP synthesis</keyword>
<keyword id="KW-0997">Cell inner membrane</keyword>
<keyword id="KW-1003">Cell membrane</keyword>
<keyword id="KW-0139">CF(1)</keyword>
<keyword id="KW-0375">Hydrogen ion transport</keyword>
<keyword id="KW-0406">Ion transport</keyword>
<keyword id="KW-0472">Membrane</keyword>
<keyword id="KW-1185">Reference proteome</keyword>
<keyword id="KW-0813">Transport</keyword>
<feature type="chain" id="PRO_0000265851" description="ATP synthase epsilon chain">
    <location>
        <begin position="1"/>
        <end position="130"/>
    </location>
</feature>
<protein>
    <recommendedName>
        <fullName evidence="1">ATP synthase epsilon chain</fullName>
    </recommendedName>
    <alternativeName>
        <fullName evidence="1">ATP synthase F1 sector epsilon subunit</fullName>
    </alternativeName>
    <alternativeName>
        <fullName evidence="1">F-ATPase epsilon subunit</fullName>
    </alternativeName>
</protein>
<reference key="1">
    <citation type="journal article" date="2005" name="Science">
        <title>Genome streamlining in a cosmopolitan oceanic bacterium.</title>
        <authorList>
            <person name="Giovannoni S.J."/>
            <person name="Tripp H.J."/>
            <person name="Givan S."/>
            <person name="Podar M."/>
            <person name="Vergin K.L."/>
            <person name="Baptista D."/>
            <person name="Bibbs L."/>
            <person name="Eads J."/>
            <person name="Richardson T.H."/>
            <person name="Noordewier M."/>
            <person name="Rappe M.S."/>
            <person name="Short J.M."/>
            <person name="Carrington J.C."/>
            <person name="Mathur E.J."/>
        </authorList>
    </citation>
    <scope>NUCLEOTIDE SEQUENCE [LARGE SCALE GENOMIC DNA]</scope>
    <source>
        <strain>HTCC1062</strain>
    </source>
</reference>
<sequence length="130" mass="14749">MSEEFKIEIVNPEKSFLSKEDVTEVVVPAFEGEMGILKDHISIISFLKPGIIKIFSKSGEDNYYVEDGIVEFKNNNLSVLTSSIFNIKDIDKDKISELLTQAEENSKNSDITDQNKYLVDQKIDVLKTLN</sequence>
<gene>
    <name evidence="1" type="primary">atpC</name>
    <name type="ordered locus">SAR11_0229</name>
</gene>
<organism>
    <name type="scientific">Pelagibacter ubique (strain HTCC1062)</name>
    <dbReference type="NCBI Taxonomy" id="335992"/>
    <lineage>
        <taxon>Bacteria</taxon>
        <taxon>Pseudomonadati</taxon>
        <taxon>Pseudomonadota</taxon>
        <taxon>Alphaproteobacteria</taxon>
        <taxon>Candidatus Pelagibacterales</taxon>
        <taxon>Candidatus Pelagibacteraceae</taxon>
        <taxon>Candidatus Pelagibacter</taxon>
    </lineage>
</organism>
<proteinExistence type="inferred from homology"/>
<accession>Q4FP39</accession>
<name>ATPE_PELUB</name>